<gene>
    <name type="primary">CHI</name>
    <name type="synonym">CFI</name>
    <name type="ordered locus">Os03g0819600</name>
    <name type="ordered locus">LOC_Os03g60509</name>
    <name type="ORF">OJ1754_E06.14</name>
</gene>
<comment type="function">
    <text evidence="1">Catalyzes the intramolecular cyclization of bicyclic chalcones into tricyclic (S)-flavanones. Responsible for the isomerization of 4,2',4',6'-tetrahydroxychalcone (also termed chalcone) into naringenin (By similarity).</text>
</comment>
<comment type="catalytic activity">
    <reaction>
        <text>a chalcone = a flavanone.</text>
        <dbReference type="EC" id="5.5.1.6"/>
    </reaction>
</comment>
<comment type="pathway">
    <text>Secondary metabolite biosynthesis; flavonoid biosynthesis.</text>
</comment>
<comment type="miscellaneous">
    <text>Part of the biosynthetic pathway for all classes of flavonoids, a large class of secondary plant metabolites, many of which are brightly colored.</text>
</comment>
<comment type="similarity">
    <text evidence="2">Belongs to the chalcone isomerase family.</text>
</comment>
<dbReference type="EC" id="5.5.1.6"/>
<dbReference type="EMBL" id="AF474922">
    <property type="protein sequence ID" value="AAM13448.1"/>
    <property type="molecule type" value="Genomic_DNA"/>
</dbReference>
<dbReference type="EMBL" id="AC104433">
    <property type="protein sequence ID" value="AAO65886.1"/>
    <property type="molecule type" value="Genomic_DNA"/>
</dbReference>
<dbReference type="EMBL" id="DP000009">
    <property type="protein sequence ID" value="ABF99575.1"/>
    <property type="molecule type" value="Genomic_DNA"/>
</dbReference>
<dbReference type="EMBL" id="AP008209">
    <property type="protein sequence ID" value="BAF13628.1"/>
    <property type="molecule type" value="Genomic_DNA"/>
</dbReference>
<dbReference type="EMBL" id="AP014959">
    <property type="protein sequence ID" value="BAS87077.1"/>
    <property type="molecule type" value="Genomic_DNA"/>
</dbReference>
<dbReference type="EMBL" id="AK061390">
    <property type="protein sequence ID" value="BAG87897.1"/>
    <property type="molecule type" value="mRNA"/>
</dbReference>
<dbReference type="EMBL" id="AK104791">
    <property type="protein sequence ID" value="BAG96953.1"/>
    <property type="molecule type" value="mRNA"/>
</dbReference>
<dbReference type="RefSeq" id="XP_015628287.1">
    <property type="nucleotide sequence ID" value="XM_015772801.1"/>
</dbReference>
<dbReference type="SMR" id="Q84T92"/>
<dbReference type="FunCoup" id="Q84T92">
    <property type="interactions" value="818"/>
</dbReference>
<dbReference type="STRING" id="39947.Q84T92"/>
<dbReference type="PaxDb" id="39947-Q84T92"/>
<dbReference type="EnsemblPlants" id="Os03t0819600-01">
    <property type="protein sequence ID" value="Os03t0819600-01"/>
    <property type="gene ID" value="Os03g0819600"/>
</dbReference>
<dbReference type="EnsemblPlants" id="Os03t0819600-02">
    <property type="protein sequence ID" value="Os03t0819600-02"/>
    <property type="gene ID" value="Os03g0819600"/>
</dbReference>
<dbReference type="Gramene" id="Os03t0819600-01">
    <property type="protein sequence ID" value="Os03t0819600-01"/>
    <property type="gene ID" value="Os03g0819600"/>
</dbReference>
<dbReference type="Gramene" id="Os03t0819600-02">
    <property type="protein sequence ID" value="Os03t0819600-02"/>
    <property type="gene ID" value="Os03g0819600"/>
</dbReference>
<dbReference type="KEGG" id="dosa:Os03g0819600"/>
<dbReference type="eggNOG" id="ENOG502QR5P">
    <property type="taxonomic scope" value="Eukaryota"/>
</dbReference>
<dbReference type="HOGENOM" id="CLU_074682_0_0_1"/>
<dbReference type="InParanoid" id="Q84T92"/>
<dbReference type="OMA" id="CGADSEK"/>
<dbReference type="OrthoDB" id="1903537at2759"/>
<dbReference type="PlantReactome" id="R-OSA-1119513">
    <property type="pathway name" value="Pinobanksin biosynthesis"/>
</dbReference>
<dbReference type="PlantReactome" id="R-OSA-1119531">
    <property type="pathway name" value="Flavonoid biosynthesis"/>
</dbReference>
<dbReference type="UniPathway" id="UPA00154"/>
<dbReference type="Proteomes" id="UP000000763">
    <property type="component" value="Chromosome 3"/>
</dbReference>
<dbReference type="Proteomes" id="UP000059680">
    <property type="component" value="Chromosome 3"/>
</dbReference>
<dbReference type="GO" id="GO:0045430">
    <property type="term" value="F:chalcone isomerase activity"/>
    <property type="evidence" value="ECO:0007669"/>
    <property type="project" value="UniProtKB-EC"/>
</dbReference>
<dbReference type="GO" id="GO:0009813">
    <property type="term" value="P:flavonoid biosynthetic process"/>
    <property type="evidence" value="ECO:0007669"/>
    <property type="project" value="UniProtKB-UniPathway"/>
</dbReference>
<dbReference type="Gene3D" id="1.10.890.20">
    <property type="match status" value="1"/>
</dbReference>
<dbReference type="Gene3D" id="3.50.70.10">
    <property type="match status" value="1"/>
</dbReference>
<dbReference type="InterPro" id="IPR044164">
    <property type="entry name" value="CFI"/>
</dbReference>
<dbReference type="InterPro" id="IPR016087">
    <property type="entry name" value="Chalcone_isomerase"/>
</dbReference>
<dbReference type="InterPro" id="IPR016088">
    <property type="entry name" value="Chalcone_isomerase_3-sand"/>
</dbReference>
<dbReference type="InterPro" id="IPR016089">
    <property type="entry name" value="Chalcone_isomerase_bundle_sf"/>
</dbReference>
<dbReference type="InterPro" id="IPR036298">
    <property type="entry name" value="Chalcone_isomerase_sf"/>
</dbReference>
<dbReference type="PANTHER" id="PTHR28039:SF8">
    <property type="entry name" value="CHALCONE--FLAVANONE ISOMERASE 1-RELATED"/>
    <property type="match status" value="1"/>
</dbReference>
<dbReference type="PANTHER" id="PTHR28039">
    <property type="entry name" value="CHALCONE--FLAVONONE ISOMERASE 1-RELATED"/>
    <property type="match status" value="1"/>
</dbReference>
<dbReference type="Pfam" id="PF02431">
    <property type="entry name" value="Chalcone"/>
    <property type="match status" value="1"/>
</dbReference>
<dbReference type="SUPFAM" id="SSF54626">
    <property type="entry name" value="Chalcone isomerase"/>
    <property type="match status" value="1"/>
</dbReference>
<organism>
    <name type="scientific">Oryza sativa subsp. japonica</name>
    <name type="common">Rice</name>
    <dbReference type="NCBI Taxonomy" id="39947"/>
    <lineage>
        <taxon>Eukaryota</taxon>
        <taxon>Viridiplantae</taxon>
        <taxon>Streptophyta</taxon>
        <taxon>Embryophyta</taxon>
        <taxon>Tracheophyta</taxon>
        <taxon>Spermatophyta</taxon>
        <taxon>Magnoliopsida</taxon>
        <taxon>Liliopsida</taxon>
        <taxon>Poales</taxon>
        <taxon>Poaceae</taxon>
        <taxon>BOP clade</taxon>
        <taxon>Oryzoideae</taxon>
        <taxon>Oryzeae</taxon>
        <taxon>Oryzinae</taxon>
        <taxon>Oryza</taxon>
        <taxon>Oryza sativa</taxon>
    </lineage>
</organism>
<accession>Q84T92</accession>
<accession>B7E6A0</accession>
<accession>Q8S3X1</accession>
<sequence length="233" mass="23893">MAAVSEVEVDGVVFPPVARPPGSGHAHFLAGAGVRGVEIAGNFIKFTAIGVYLEEGAAVPALAKKWAGKSADELAADAAFFRDVVTGDFEKFTRVTMILPLTGEQYSDKVTENCVAAWKAAGVYTDAEGAAADKFKEAFKPHSFPPGASILFTHSPPGVLTVAFSKDSSVPEGAVAAAAIENRALCEAVLDSIIGEHGVSPAAKRSIAARVSQLLKAESTGDVAAAEPAPVSA</sequence>
<proteinExistence type="evidence at transcript level"/>
<feature type="chain" id="PRO_0000300846" description="Chalcone--flavanone isomerase">
    <location>
        <begin position="1"/>
        <end position="233"/>
    </location>
</feature>
<feature type="binding site" evidence="1">
    <location>
        <position position="47"/>
    </location>
    <ligand>
        <name>substrate</name>
    </ligand>
</feature>
<feature type="binding site" evidence="1">
    <location>
        <position position="113"/>
    </location>
    <ligand>
        <name>substrate</name>
    </ligand>
</feature>
<feature type="binding site" evidence="1">
    <location>
        <position position="192"/>
    </location>
    <ligand>
        <name>substrate</name>
    </ligand>
</feature>
<feature type="site" description="Important for catalytic activity" evidence="1">
    <location>
        <position position="106"/>
    </location>
</feature>
<feature type="sequence conflict" description="In Ref. 1; AAM13448." evidence="2" ref="1">
    <original>F</original>
    <variation>L</variation>
    <location>
        <position position="135"/>
    </location>
</feature>
<name>CFI_ORYSJ</name>
<evidence type="ECO:0000250" key="1"/>
<evidence type="ECO:0000305" key="2"/>
<keyword id="KW-0284">Flavonoid biosynthesis</keyword>
<keyword id="KW-0413">Isomerase</keyword>
<keyword id="KW-1185">Reference proteome</keyword>
<reference key="1">
    <citation type="journal article" date="2003" name="Gene">
        <title>Chalcone isomerase gene from rice (Oryza sativa) and barley (Hordeum vulgare): physical, genetic and mutation mapping.</title>
        <authorList>
            <person name="Druka A."/>
            <person name="Kudrna D."/>
            <person name="Rostoks N."/>
            <person name="Brueggeman R."/>
            <person name="von Wettstein D."/>
            <person name="Kleinhofs A."/>
        </authorList>
    </citation>
    <scope>NUCLEOTIDE SEQUENCE [GENOMIC DNA]</scope>
    <source>
        <strain>cv. Nipponbare</strain>
    </source>
</reference>
<reference key="2">
    <citation type="journal article" date="2005" name="Genome Res.">
        <title>Sequence, annotation, and analysis of synteny between rice chromosome 3 and diverged grass species.</title>
        <authorList>
            <consortium name="The rice chromosome 3 sequencing consortium"/>
            <person name="Buell C.R."/>
            <person name="Yuan Q."/>
            <person name="Ouyang S."/>
            <person name="Liu J."/>
            <person name="Zhu W."/>
            <person name="Wang A."/>
            <person name="Maiti R."/>
            <person name="Haas B."/>
            <person name="Wortman J."/>
            <person name="Pertea M."/>
            <person name="Jones K.M."/>
            <person name="Kim M."/>
            <person name="Overton L."/>
            <person name="Tsitrin T."/>
            <person name="Fadrosh D."/>
            <person name="Bera J."/>
            <person name="Weaver B."/>
            <person name="Jin S."/>
            <person name="Johri S."/>
            <person name="Reardon M."/>
            <person name="Webb K."/>
            <person name="Hill J."/>
            <person name="Moffat K."/>
            <person name="Tallon L."/>
            <person name="Van Aken S."/>
            <person name="Lewis M."/>
            <person name="Utterback T."/>
            <person name="Feldblyum T."/>
            <person name="Zismann V."/>
            <person name="Iobst S."/>
            <person name="Hsiao J."/>
            <person name="de Vazeille A.R."/>
            <person name="Salzberg S.L."/>
            <person name="White O."/>
            <person name="Fraser C.M."/>
            <person name="Yu Y."/>
            <person name="Kim H."/>
            <person name="Rambo T."/>
            <person name="Currie J."/>
            <person name="Collura K."/>
            <person name="Kernodle-Thompson S."/>
            <person name="Wei F."/>
            <person name="Kudrna K."/>
            <person name="Ammiraju J.S.S."/>
            <person name="Luo M."/>
            <person name="Goicoechea J.L."/>
            <person name="Wing R.A."/>
            <person name="Henry D."/>
            <person name="Oates R."/>
            <person name="Palmer M."/>
            <person name="Pries G."/>
            <person name="Saski C."/>
            <person name="Simmons J."/>
            <person name="Soderlund C."/>
            <person name="Nelson W."/>
            <person name="de la Bastide M."/>
            <person name="Spiegel L."/>
            <person name="Nascimento L."/>
            <person name="Huang E."/>
            <person name="Preston R."/>
            <person name="Zutavern T."/>
            <person name="Palmer L."/>
            <person name="O'Shaughnessy A."/>
            <person name="Dike S."/>
            <person name="McCombie W.R."/>
            <person name="Minx P."/>
            <person name="Cordum H."/>
            <person name="Wilson R."/>
            <person name="Jin W."/>
            <person name="Lee H.R."/>
            <person name="Jiang J."/>
            <person name="Jackson S."/>
        </authorList>
    </citation>
    <scope>NUCLEOTIDE SEQUENCE [LARGE SCALE GENOMIC DNA]</scope>
    <source>
        <strain>cv. Nipponbare</strain>
    </source>
</reference>
<reference key="3">
    <citation type="journal article" date="2005" name="Nature">
        <title>The map-based sequence of the rice genome.</title>
        <authorList>
            <consortium name="International rice genome sequencing project (IRGSP)"/>
        </authorList>
    </citation>
    <scope>NUCLEOTIDE SEQUENCE [LARGE SCALE GENOMIC DNA]</scope>
    <source>
        <strain>cv. Nipponbare</strain>
    </source>
</reference>
<reference key="4">
    <citation type="journal article" date="2008" name="Nucleic Acids Res.">
        <title>The rice annotation project database (RAP-DB): 2008 update.</title>
        <authorList>
            <consortium name="The rice annotation project (RAP)"/>
        </authorList>
    </citation>
    <scope>GENOME REANNOTATION</scope>
    <source>
        <strain>cv. Nipponbare</strain>
    </source>
</reference>
<reference key="5">
    <citation type="journal article" date="2013" name="Rice">
        <title>Improvement of the Oryza sativa Nipponbare reference genome using next generation sequence and optical map data.</title>
        <authorList>
            <person name="Kawahara Y."/>
            <person name="de la Bastide M."/>
            <person name="Hamilton J.P."/>
            <person name="Kanamori H."/>
            <person name="McCombie W.R."/>
            <person name="Ouyang S."/>
            <person name="Schwartz D.C."/>
            <person name="Tanaka T."/>
            <person name="Wu J."/>
            <person name="Zhou S."/>
            <person name="Childs K.L."/>
            <person name="Davidson R.M."/>
            <person name="Lin H."/>
            <person name="Quesada-Ocampo L."/>
            <person name="Vaillancourt B."/>
            <person name="Sakai H."/>
            <person name="Lee S.S."/>
            <person name="Kim J."/>
            <person name="Numa H."/>
            <person name="Itoh T."/>
            <person name="Buell C.R."/>
            <person name="Matsumoto T."/>
        </authorList>
    </citation>
    <scope>GENOME REANNOTATION</scope>
    <source>
        <strain>cv. Nipponbare</strain>
    </source>
</reference>
<reference key="6">
    <citation type="journal article" date="2003" name="Science">
        <title>Collection, mapping, and annotation of over 28,000 cDNA clones from japonica rice.</title>
        <authorList>
            <consortium name="The rice full-length cDNA consortium"/>
        </authorList>
    </citation>
    <scope>NUCLEOTIDE SEQUENCE [LARGE SCALE MRNA]</scope>
    <source>
        <strain>cv. Nipponbare</strain>
    </source>
</reference>
<protein>
    <recommendedName>
        <fullName>Chalcone--flavanone isomerase</fullName>
        <shortName>Chalcone isomerase</shortName>
        <ecNumber>5.5.1.6</ecNumber>
    </recommendedName>
</protein>